<gene>
    <name evidence="1" type="primary">infA2</name>
    <name type="ordered locus">Bcen_3905</name>
</gene>
<protein>
    <recommendedName>
        <fullName evidence="1">Translation initiation factor IF-1 2</fullName>
    </recommendedName>
</protein>
<proteinExistence type="inferred from homology"/>
<feature type="chain" id="PRO_0000263771" description="Translation initiation factor IF-1 2">
    <location>
        <begin position="1"/>
        <end position="87"/>
    </location>
</feature>
<feature type="domain" description="S1-like" evidence="1">
    <location>
        <begin position="1"/>
        <end position="72"/>
    </location>
</feature>
<feature type="region of interest" description="Disordered" evidence="2">
    <location>
        <begin position="68"/>
        <end position="87"/>
    </location>
</feature>
<feature type="compositionally biased region" description="Pro residues" evidence="2">
    <location>
        <begin position="77"/>
        <end position="87"/>
    </location>
</feature>
<comment type="function">
    <text evidence="1">One of the essential components for the initiation of protein synthesis. Stabilizes the binding of IF-2 and IF-3 on the 30S subunit to which N-formylmethionyl-tRNA(fMet) subsequently binds. Helps modulate mRNA selection, yielding the 30S pre-initiation complex (PIC). Upon addition of the 50S ribosomal subunit IF-1, IF-2 and IF-3 are released leaving the mature 70S translation initiation complex.</text>
</comment>
<comment type="subunit">
    <text evidence="1">Component of the 30S ribosomal translation pre-initiation complex which assembles on the 30S ribosome in the order IF-2 and IF-3, IF-1 and N-formylmethionyl-tRNA(fMet); mRNA recruitment can occur at any time during PIC assembly.</text>
</comment>
<comment type="subcellular location">
    <subcellularLocation>
        <location evidence="1">Cytoplasm</location>
    </subcellularLocation>
</comment>
<comment type="similarity">
    <text evidence="1">Belongs to the IF-1 family.</text>
</comment>
<sequence>MAKEELLELDGIVDEVLPDSKYRVTLENGVVVGAYASGRMRKNHIRILAGDRVTLELSVYDLTKGRINFRHKDANSPRPPRSGQPRR</sequence>
<evidence type="ECO:0000255" key="1">
    <source>
        <dbReference type="HAMAP-Rule" id="MF_00075"/>
    </source>
</evidence>
<evidence type="ECO:0000256" key="2">
    <source>
        <dbReference type="SAM" id="MobiDB-lite"/>
    </source>
</evidence>
<name>IF12_BURO1</name>
<reference key="1">
    <citation type="submission" date="2006-05" db="EMBL/GenBank/DDBJ databases">
        <title>Complete sequence of chromosome 2 of Burkholderia cenocepacia AU 1054.</title>
        <authorList>
            <consortium name="US DOE Joint Genome Institute"/>
            <person name="Copeland A."/>
            <person name="Lucas S."/>
            <person name="Lapidus A."/>
            <person name="Barry K."/>
            <person name="Detter J.C."/>
            <person name="Glavina del Rio T."/>
            <person name="Hammon N."/>
            <person name="Israni S."/>
            <person name="Dalin E."/>
            <person name="Tice H."/>
            <person name="Pitluck S."/>
            <person name="Chain P."/>
            <person name="Malfatti S."/>
            <person name="Shin M."/>
            <person name="Vergez L."/>
            <person name="Schmutz J."/>
            <person name="Larimer F."/>
            <person name="Land M."/>
            <person name="Hauser L."/>
            <person name="Kyrpides N."/>
            <person name="Lykidis A."/>
            <person name="LiPuma J.J."/>
            <person name="Konstantinidis K."/>
            <person name="Tiedje J.M."/>
            <person name="Richardson P."/>
        </authorList>
    </citation>
    <scope>NUCLEOTIDE SEQUENCE [LARGE SCALE GENOMIC DNA]</scope>
    <source>
        <strain>AU 1054</strain>
    </source>
</reference>
<keyword id="KW-0963">Cytoplasm</keyword>
<keyword id="KW-0396">Initiation factor</keyword>
<keyword id="KW-0648">Protein biosynthesis</keyword>
<keyword id="KW-0694">RNA-binding</keyword>
<keyword id="KW-0699">rRNA-binding</keyword>
<organism>
    <name type="scientific">Burkholderia orbicola (strain AU 1054)</name>
    <dbReference type="NCBI Taxonomy" id="331271"/>
    <lineage>
        <taxon>Bacteria</taxon>
        <taxon>Pseudomonadati</taxon>
        <taxon>Pseudomonadota</taxon>
        <taxon>Betaproteobacteria</taxon>
        <taxon>Burkholderiales</taxon>
        <taxon>Burkholderiaceae</taxon>
        <taxon>Burkholderia</taxon>
        <taxon>Burkholderia cepacia complex</taxon>
        <taxon>Burkholderia orbicola</taxon>
    </lineage>
</organism>
<dbReference type="EMBL" id="CP000379">
    <property type="protein sequence ID" value="ABF78794.1"/>
    <property type="molecule type" value="Genomic_DNA"/>
</dbReference>
<dbReference type="SMR" id="Q1BNL1"/>
<dbReference type="HOGENOM" id="CLU_151267_4_1_4"/>
<dbReference type="GO" id="GO:0005829">
    <property type="term" value="C:cytosol"/>
    <property type="evidence" value="ECO:0007669"/>
    <property type="project" value="TreeGrafter"/>
</dbReference>
<dbReference type="GO" id="GO:0043022">
    <property type="term" value="F:ribosome binding"/>
    <property type="evidence" value="ECO:0007669"/>
    <property type="project" value="UniProtKB-UniRule"/>
</dbReference>
<dbReference type="GO" id="GO:0019843">
    <property type="term" value="F:rRNA binding"/>
    <property type="evidence" value="ECO:0007669"/>
    <property type="project" value="UniProtKB-UniRule"/>
</dbReference>
<dbReference type="GO" id="GO:0003743">
    <property type="term" value="F:translation initiation factor activity"/>
    <property type="evidence" value="ECO:0007669"/>
    <property type="project" value="UniProtKB-UniRule"/>
</dbReference>
<dbReference type="CDD" id="cd04451">
    <property type="entry name" value="S1_IF1"/>
    <property type="match status" value="1"/>
</dbReference>
<dbReference type="FunFam" id="2.40.50.140:FF:000002">
    <property type="entry name" value="Translation initiation factor IF-1"/>
    <property type="match status" value="1"/>
</dbReference>
<dbReference type="Gene3D" id="2.40.50.140">
    <property type="entry name" value="Nucleic acid-binding proteins"/>
    <property type="match status" value="1"/>
</dbReference>
<dbReference type="HAMAP" id="MF_00075">
    <property type="entry name" value="IF_1"/>
    <property type="match status" value="1"/>
</dbReference>
<dbReference type="InterPro" id="IPR012340">
    <property type="entry name" value="NA-bd_OB-fold"/>
</dbReference>
<dbReference type="InterPro" id="IPR006196">
    <property type="entry name" value="RNA-binding_domain_S1_IF1"/>
</dbReference>
<dbReference type="InterPro" id="IPR004368">
    <property type="entry name" value="TIF_IF1"/>
</dbReference>
<dbReference type="NCBIfam" id="TIGR00008">
    <property type="entry name" value="infA"/>
    <property type="match status" value="1"/>
</dbReference>
<dbReference type="PANTHER" id="PTHR33370">
    <property type="entry name" value="TRANSLATION INITIATION FACTOR IF-1, CHLOROPLASTIC"/>
    <property type="match status" value="1"/>
</dbReference>
<dbReference type="PANTHER" id="PTHR33370:SF1">
    <property type="entry name" value="TRANSLATION INITIATION FACTOR IF-1, CHLOROPLASTIC"/>
    <property type="match status" value="1"/>
</dbReference>
<dbReference type="Pfam" id="PF01176">
    <property type="entry name" value="eIF-1a"/>
    <property type="match status" value="1"/>
</dbReference>
<dbReference type="SUPFAM" id="SSF50249">
    <property type="entry name" value="Nucleic acid-binding proteins"/>
    <property type="match status" value="1"/>
</dbReference>
<dbReference type="PROSITE" id="PS50832">
    <property type="entry name" value="S1_IF1_TYPE"/>
    <property type="match status" value="1"/>
</dbReference>
<accession>Q1BNL1</accession>